<name>PSD_CLOBJ</name>
<keyword id="KW-1003">Cell membrane</keyword>
<keyword id="KW-0210">Decarboxylase</keyword>
<keyword id="KW-0444">Lipid biosynthesis</keyword>
<keyword id="KW-0443">Lipid metabolism</keyword>
<keyword id="KW-0456">Lyase</keyword>
<keyword id="KW-0472">Membrane</keyword>
<keyword id="KW-0594">Phospholipid biosynthesis</keyword>
<keyword id="KW-1208">Phospholipid metabolism</keyword>
<keyword id="KW-0670">Pyruvate</keyword>
<keyword id="KW-0865">Zymogen</keyword>
<feature type="chain" id="PRO_1000147613" description="Phosphatidylserine decarboxylase beta chain" evidence="1">
    <location>
        <begin position="1"/>
        <end position="255"/>
    </location>
</feature>
<feature type="chain" id="PRO_1000147614" description="Phosphatidylserine decarboxylase alpha chain" evidence="1">
    <location>
        <begin position="256"/>
        <end position="295"/>
    </location>
</feature>
<feature type="active site" description="Charge relay system; for autoendoproteolytic cleavage activity" evidence="1">
    <location>
        <position position="113"/>
    </location>
</feature>
<feature type="active site" description="Charge relay system; for autoendoproteolytic cleavage activity" evidence="1">
    <location>
        <position position="169"/>
    </location>
</feature>
<feature type="active site" description="Charge relay system; for autoendoproteolytic cleavage activity" evidence="1">
    <location>
        <position position="256"/>
    </location>
</feature>
<feature type="active site" description="Schiff-base intermediate with substrate; via pyruvic acid; for decarboxylase activity" evidence="1">
    <location>
        <position position="256"/>
    </location>
</feature>
<feature type="site" description="Cleavage (non-hydrolytic); by autocatalysis" evidence="1">
    <location>
        <begin position="255"/>
        <end position="256"/>
    </location>
</feature>
<feature type="modified residue" description="Pyruvic acid (Ser); by autocatalysis" evidence="1">
    <location>
        <position position="256"/>
    </location>
</feature>
<dbReference type="EC" id="4.1.1.65" evidence="1"/>
<dbReference type="EMBL" id="CP001581">
    <property type="protein sequence ID" value="ACO85144.1"/>
    <property type="molecule type" value="Genomic_DNA"/>
</dbReference>
<dbReference type="RefSeq" id="WP_012704598.1">
    <property type="nucleotide sequence ID" value="NC_012563.1"/>
</dbReference>
<dbReference type="SMR" id="C1FPI8"/>
<dbReference type="KEGG" id="cby:CLM_0028"/>
<dbReference type="eggNOG" id="COG0688">
    <property type="taxonomic scope" value="Bacteria"/>
</dbReference>
<dbReference type="HOGENOM" id="CLU_029061_2_2_9"/>
<dbReference type="UniPathway" id="UPA00558">
    <property type="reaction ID" value="UER00616"/>
</dbReference>
<dbReference type="Proteomes" id="UP000001374">
    <property type="component" value="Chromosome"/>
</dbReference>
<dbReference type="GO" id="GO:0005886">
    <property type="term" value="C:plasma membrane"/>
    <property type="evidence" value="ECO:0007669"/>
    <property type="project" value="UniProtKB-SubCell"/>
</dbReference>
<dbReference type="GO" id="GO:0004609">
    <property type="term" value="F:phosphatidylserine decarboxylase activity"/>
    <property type="evidence" value="ECO:0007669"/>
    <property type="project" value="UniProtKB-UniRule"/>
</dbReference>
<dbReference type="GO" id="GO:0006646">
    <property type="term" value="P:phosphatidylethanolamine biosynthetic process"/>
    <property type="evidence" value="ECO:0007669"/>
    <property type="project" value="UniProtKB-UniRule"/>
</dbReference>
<dbReference type="HAMAP" id="MF_00663">
    <property type="entry name" value="PS_decarb_PSD_B_type2"/>
    <property type="match status" value="1"/>
</dbReference>
<dbReference type="InterPro" id="IPR003817">
    <property type="entry name" value="PS_Dcarbxylase"/>
</dbReference>
<dbReference type="InterPro" id="IPR033177">
    <property type="entry name" value="PSD-B"/>
</dbReference>
<dbReference type="InterPro" id="IPR033179">
    <property type="entry name" value="PSD_type2_pro"/>
</dbReference>
<dbReference type="NCBIfam" id="NF001941">
    <property type="entry name" value="PRK00723.1"/>
    <property type="match status" value="1"/>
</dbReference>
<dbReference type="NCBIfam" id="TIGR00163">
    <property type="entry name" value="PS_decarb"/>
    <property type="match status" value="1"/>
</dbReference>
<dbReference type="PANTHER" id="PTHR10067">
    <property type="entry name" value="PHOSPHATIDYLSERINE DECARBOXYLASE"/>
    <property type="match status" value="1"/>
</dbReference>
<dbReference type="PANTHER" id="PTHR10067:SF17">
    <property type="entry name" value="PHOSPHATIDYLSERINE DECARBOXYLASE PROENZYME 2"/>
    <property type="match status" value="1"/>
</dbReference>
<dbReference type="Pfam" id="PF02666">
    <property type="entry name" value="PS_Dcarbxylase"/>
    <property type="match status" value="1"/>
</dbReference>
<reference key="1">
    <citation type="submission" date="2008-10" db="EMBL/GenBank/DDBJ databases">
        <title>Genome sequence of Clostridium botulinum A2 Kyoto.</title>
        <authorList>
            <person name="Shrivastava S."/>
            <person name="Brinkac L.M."/>
            <person name="Brown J.L."/>
            <person name="Bruce D."/>
            <person name="Detter C.C."/>
            <person name="Johnson E.A."/>
            <person name="Munk C.A."/>
            <person name="Smith L.A."/>
            <person name="Smith T.J."/>
            <person name="Sutton G."/>
            <person name="Brettin T.S."/>
        </authorList>
    </citation>
    <scope>NUCLEOTIDE SEQUENCE [LARGE SCALE GENOMIC DNA]</scope>
    <source>
        <strain>Kyoto / Type A2</strain>
    </source>
</reference>
<sequence>MIKYYNRKTNDYDIEKVAGEKYLNWTYSSPMGMNLLEIFIKKKFFSKIYGFYCDRRLSHNKIDKFINDFQIDMSLCENQTSDFKCFNDFFTRKLKKEARPIKADKNILISPGDGKILAYKNLNLNSVTEVKGINYSFYELINNDSLAKEYDNGTCLILRLCPTDYHRFHFIDNGTCENTIKLDGFYYSVNPIALSKIPSLFCKNKREYAIFHSENFGDVIFMEVGATCVGSIIQTYKPNTKIFKGDEKGYFKFGGSTVILFFKENTIKVDNDILNQSKLGYETSVIMGEPIGSKK</sequence>
<accession>C1FPI8</accession>
<organism>
    <name type="scientific">Clostridium botulinum (strain Kyoto / Type A2)</name>
    <dbReference type="NCBI Taxonomy" id="536232"/>
    <lineage>
        <taxon>Bacteria</taxon>
        <taxon>Bacillati</taxon>
        <taxon>Bacillota</taxon>
        <taxon>Clostridia</taxon>
        <taxon>Eubacteriales</taxon>
        <taxon>Clostridiaceae</taxon>
        <taxon>Clostridium</taxon>
    </lineage>
</organism>
<protein>
    <recommendedName>
        <fullName evidence="1">Phosphatidylserine decarboxylase proenzyme</fullName>
        <ecNumber evidence="1">4.1.1.65</ecNumber>
    </recommendedName>
    <component>
        <recommendedName>
            <fullName evidence="1">Phosphatidylserine decarboxylase alpha chain</fullName>
        </recommendedName>
    </component>
    <component>
        <recommendedName>
            <fullName evidence="1">Phosphatidylserine decarboxylase beta chain</fullName>
        </recommendedName>
    </component>
</protein>
<evidence type="ECO:0000255" key="1">
    <source>
        <dbReference type="HAMAP-Rule" id="MF_00663"/>
    </source>
</evidence>
<comment type="function">
    <text evidence="1">Catalyzes the formation of phosphatidylethanolamine (PtdEtn) from phosphatidylserine (PtdSer).</text>
</comment>
<comment type="catalytic activity">
    <reaction evidence="1">
        <text>a 1,2-diacyl-sn-glycero-3-phospho-L-serine + H(+) = a 1,2-diacyl-sn-glycero-3-phosphoethanolamine + CO2</text>
        <dbReference type="Rhea" id="RHEA:20828"/>
        <dbReference type="ChEBI" id="CHEBI:15378"/>
        <dbReference type="ChEBI" id="CHEBI:16526"/>
        <dbReference type="ChEBI" id="CHEBI:57262"/>
        <dbReference type="ChEBI" id="CHEBI:64612"/>
        <dbReference type="EC" id="4.1.1.65"/>
    </reaction>
</comment>
<comment type="cofactor">
    <cofactor evidence="1">
        <name>pyruvate</name>
        <dbReference type="ChEBI" id="CHEBI:15361"/>
    </cofactor>
    <text evidence="1">Binds 1 pyruvoyl group covalently per subunit.</text>
</comment>
<comment type="pathway">
    <text evidence="1">Phospholipid metabolism; phosphatidylethanolamine biosynthesis; phosphatidylethanolamine from CDP-diacylglycerol: step 2/2.</text>
</comment>
<comment type="subunit">
    <text evidence="1">Heterodimer of a large membrane-associated beta subunit and a small pyruvoyl-containing alpha subunit.</text>
</comment>
<comment type="subcellular location">
    <subcellularLocation>
        <location evidence="1">Cell membrane</location>
        <topology evidence="1">Peripheral membrane protein</topology>
    </subcellularLocation>
</comment>
<comment type="PTM">
    <text evidence="1">Is synthesized initially as an inactive proenzyme. Formation of the active enzyme involves a self-maturation process in which the active site pyruvoyl group is generated from an internal serine residue via an autocatalytic post-translational modification. Two non-identical subunits are generated from the proenzyme in this reaction, and the pyruvate is formed at the N-terminus of the alpha chain, which is derived from the carboxyl end of the proenzyme. The autoendoproteolytic cleavage occurs by a canonical serine protease mechanism, in which the side chain hydroxyl group of the serine supplies its oxygen atom to form the C-terminus of the beta chain, while the remainder of the serine residue undergoes an oxidative deamination to produce ammonia and the pyruvoyl prosthetic group on the alpha chain. During this reaction, the Ser that is part of the protease active site of the proenzyme becomes the pyruvoyl prosthetic group, which constitutes an essential element of the active site of the mature decarboxylase.</text>
</comment>
<comment type="similarity">
    <text evidence="1">Belongs to the phosphatidylserine decarboxylase family. PSD-B subfamily. Prokaryotic type II sub-subfamily.</text>
</comment>
<gene>
    <name evidence="1" type="primary">psd</name>
    <name type="ordered locus">CLM_0028</name>
</gene>
<proteinExistence type="inferred from homology"/>